<gene>
    <name evidence="5" type="primary">hyd3</name>
    <name type="ORF">MAA_01182</name>
</gene>
<evidence type="ECO:0000250" key="1">
    <source>
        <dbReference type="UniProtKB" id="P52754"/>
    </source>
</evidence>
<evidence type="ECO:0000255" key="2"/>
<evidence type="ECO:0000269" key="3">
    <source>
    </source>
</evidence>
<evidence type="ECO:0000303" key="4">
    <source>
    </source>
</evidence>
<evidence type="ECO:0000303" key="5">
    <source>
    </source>
</evidence>
<evidence type="ECO:0000305" key="6"/>
<evidence type="ECO:0000305" key="7">
    <source>
    </source>
</evidence>
<proteinExistence type="inferred from homology"/>
<accession>E9EN44</accession>
<comment type="function">
    <text evidence="3 7">Aerial growth, conidiation, and dispersal of filamentous fungi in the environment rely upon a capability of their secreting small amphipathic proteins called hydrophobins (HPBs) with low sequence identity. Class I can self-assemble into an outermost layer of rodlet bundles on aerial cell surfaces, conferring cellular hydrophobicity that supports fungal growth, development and dispersal; whereas Class II form highly ordered films at water-air interfaces through intermolecular interactions but contribute nothing to the rodlet structure (Probable). Hyd3 plays a neglectable role in hyphal growth and asexual development and does not seem involved in cellular hydrophobicity, conidial adhesion, stress tolerance nor insect pathogenicity (PubMed:37844657).</text>
</comment>
<comment type="subcellular location">
    <subcellularLocation>
        <location evidence="7">Secreted</location>
    </subcellularLocation>
    <subcellularLocation>
        <location evidence="7">Secreted</location>
        <location evidence="7">Cell wall</location>
    </subcellularLocation>
</comment>
<comment type="disruption phenotype">
    <text evidence="3">Does not affect conidial rodlet bundles, conidial hydrophobicity, adhesion to insect cuticle, insect pathogenicity, UVB resistance nor heat tolerance.</text>
</comment>
<comment type="similarity">
    <text evidence="6">Belongs to the cerato-ulmin hydrophobin family.</text>
</comment>
<sequence length="95" mass="9288">MKLLAVAALLAGAAIAAPTSNTGGGSVCPSGLYSNPQCCSTVIIGVIALDCKSPSEVPRDGTDLRNICAKTGQKAACCVIPVAGQALLCETAPGA</sequence>
<protein>
    <recommendedName>
        <fullName evidence="4">Class II hydrophobin 3</fullName>
    </recommendedName>
</protein>
<dbReference type="EMBL" id="ADNJ02000008">
    <property type="protein sequence ID" value="EFZ04108.1"/>
    <property type="molecule type" value="Genomic_DNA"/>
</dbReference>
<dbReference type="RefSeq" id="XP_007817371.1">
    <property type="nucleotide sequence ID" value="XM_007819180.1"/>
</dbReference>
<dbReference type="SMR" id="E9EN44"/>
<dbReference type="GeneID" id="19255468"/>
<dbReference type="KEGG" id="maj:MAA_01182"/>
<dbReference type="HOGENOM" id="CLU_141181_2_2_1"/>
<dbReference type="OrthoDB" id="4941018at2759"/>
<dbReference type="Proteomes" id="UP000002498">
    <property type="component" value="Unassembled WGS sequence"/>
</dbReference>
<dbReference type="GO" id="GO:0005576">
    <property type="term" value="C:extracellular region"/>
    <property type="evidence" value="ECO:0007669"/>
    <property type="project" value="UniProtKB-KW"/>
</dbReference>
<dbReference type="CDD" id="cd23508">
    <property type="entry name" value="hydrophobin_II"/>
    <property type="match status" value="1"/>
</dbReference>
<dbReference type="Gene3D" id="3.20.120.10">
    <property type="entry name" value="Hydrophobin"/>
    <property type="match status" value="1"/>
</dbReference>
<dbReference type="InterPro" id="IPR010636">
    <property type="entry name" value="Cerato-ulmin_hydrophobin"/>
</dbReference>
<dbReference type="InterPro" id="IPR036686">
    <property type="entry name" value="Hydrophobin_sf"/>
</dbReference>
<dbReference type="PANTHER" id="PTHR42341">
    <property type="entry name" value="HYDROPHOBIN"/>
    <property type="match status" value="1"/>
</dbReference>
<dbReference type="PANTHER" id="PTHR42341:SF1">
    <property type="entry name" value="HYDROPHOBIN"/>
    <property type="match status" value="1"/>
</dbReference>
<dbReference type="Pfam" id="PF06766">
    <property type="entry name" value="Hydrophobin_2"/>
    <property type="match status" value="1"/>
</dbReference>
<dbReference type="SUPFAM" id="SSF101751">
    <property type="entry name" value="Hydrophobin II, HfbII"/>
    <property type="match status" value="1"/>
</dbReference>
<reference key="1">
    <citation type="journal article" date="2011" name="PLoS Genet.">
        <title>Genome sequencing and comparative transcriptomics of the model entomopathogenic fungi Metarhizium anisopliae and M. acridum.</title>
        <authorList>
            <person name="Gao Q."/>
            <person name="Jin K."/>
            <person name="Ying S.-H."/>
            <person name="Zhang Y."/>
            <person name="Xiao G."/>
            <person name="Shang Y."/>
            <person name="Duan Z."/>
            <person name="Hu X."/>
            <person name="Xie X.-Q."/>
            <person name="Zhou G."/>
            <person name="Peng G."/>
            <person name="Luo Z."/>
            <person name="Huang W."/>
            <person name="Wang B."/>
            <person name="Fang W."/>
            <person name="Wang S."/>
            <person name="Zhong Y."/>
            <person name="Ma L.-J."/>
            <person name="St Leger R.J."/>
            <person name="Zhao G.-P."/>
            <person name="Pei Y."/>
            <person name="Feng M.-G."/>
            <person name="Xia Y."/>
            <person name="Wang C."/>
        </authorList>
    </citation>
    <scope>NUCLEOTIDE SEQUENCE [LARGE SCALE GENOMIC DNA]</scope>
    <source>
        <strain>ARSEF 23 / ATCC MYA-3075</strain>
    </source>
</reference>
<reference key="2">
    <citation type="journal article" date="2014" name="Proc. Natl. Acad. Sci. U.S.A.">
        <title>Trajectory and genomic determinants of fungal-pathogen speciation and host adaptation.</title>
        <authorList>
            <person name="Hu X."/>
            <person name="Xiao G."/>
            <person name="Zheng P."/>
            <person name="Shang Y."/>
            <person name="Su Y."/>
            <person name="Zhang X."/>
            <person name="Liu X."/>
            <person name="Zhan S."/>
            <person name="St Leger R.J."/>
            <person name="Wang C."/>
        </authorList>
    </citation>
    <scope>GENOME REANNOTATION</scope>
    <source>
        <strain>ARSEF 23 / ATCC MYA-3075</strain>
    </source>
</reference>
<reference key="3">
    <citation type="journal article" date="2023" name="J. Invertebr. Pathol.">
        <title>Only one of three hydrophobins (Hyd1-3) contributes to conidial hydrophobicity and insect pathogenicity of Metarhizium robertsii.</title>
        <authorList>
            <person name="Zhang J.G."/>
            <person name="Xu S.Y."/>
            <person name="Ying S.H."/>
            <person name="Feng M.G."/>
        </authorList>
    </citation>
    <scope>FUNCTION</scope>
    <scope>DISRUPTION PHENOTYPE</scope>
</reference>
<feature type="signal peptide" evidence="2">
    <location>
        <begin position="1"/>
        <end position="16"/>
    </location>
</feature>
<feature type="chain" id="PRO_5003235576" description="Class II hydrophobin 3">
    <location>
        <begin position="17"/>
        <end position="95"/>
    </location>
</feature>
<feature type="disulfide bond" evidence="1">
    <location>
        <begin position="28"/>
        <end position="77"/>
    </location>
</feature>
<feature type="disulfide bond" evidence="1">
    <location>
        <begin position="38"/>
        <end position="68"/>
    </location>
</feature>
<feature type="disulfide bond" evidence="1">
    <location>
        <begin position="39"/>
        <end position="51"/>
    </location>
</feature>
<feature type="disulfide bond" evidence="1">
    <location>
        <begin position="78"/>
        <end position="89"/>
    </location>
</feature>
<keyword id="KW-0134">Cell wall</keyword>
<keyword id="KW-1015">Disulfide bond</keyword>
<keyword id="KW-0964">Secreted</keyword>
<keyword id="KW-0732">Signal</keyword>
<organism>
    <name type="scientific">Metarhizium robertsii (strain ARSEF 23 / ATCC MYA-3075)</name>
    <name type="common">Metarhizium anisopliae (strain ARSEF 23)</name>
    <dbReference type="NCBI Taxonomy" id="655844"/>
    <lineage>
        <taxon>Eukaryota</taxon>
        <taxon>Fungi</taxon>
        <taxon>Dikarya</taxon>
        <taxon>Ascomycota</taxon>
        <taxon>Pezizomycotina</taxon>
        <taxon>Sordariomycetes</taxon>
        <taxon>Hypocreomycetidae</taxon>
        <taxon>Hypocreales</taxon>
        <taxon>Clavicipitaceae</taxon>
        <taxon>Metarhizium</taxon>
    </lineage>
</organism>
<name>HYD3_METRA</name>